<sequence>MRGPEPGPQPTMEGDVLDTLEALGYKGPLLEEQALTKAAEGGLSSPEFSELCIWLGSQIKSLCNLEESITSAGRDDLESFQLEISGFLKEMACPYSVLISGDIKDRLKKKEDCLKLLLFLSTELQASQILQNKKHKNSQLDKNSEVYQEVQAMFDTLGIPKSTTSDIPHMLNQVESKVKDILSKVQKNHVGKPLLKMDLNSEQAEQLERINDALSCEYECRRRMLMKRLDVTVQSFGWSDRAKVKTDDIARIYQPKRYALSPKTTITMAHLLAAREDLSKIIRTSSGTSREKTACAINKVLMGRVPDRGGRPNEIEPPPPEMPPWQKRQEGGGGRGGWGGGGGGGGRGGGGGGGGRGGWGGGGGGWGGGGGGGGGWGGGGGGGRGGFQGRGDYGGRGGYGGRGGYGGRGYGDPYGGGGGGGGGGGGGGGYRRY</sequence>
<reference key="1">
    <citation type="journal article" date="2004" name="Nat. Genet.">
        <title>Complete sequencing and characterization of 21,243 full-length human cDNAs.</title>
        <authorList>
            <person name="Ota T."/>
            <person name="Suzuki Y."/>
            <person name="Nishikawa T."/>
            <person name="Otsuki T."/>
            <person name="Sugiyama T."/>
            <person name="Irie R."/>
            <person name="Wakamatsu A."/>
            <person name="Hayashi K."/>
            <person name="Sato H."/>
            <person name="Nagai K."/>
            <person name="Kimura K."/>
            <person name="Makita H."/>
            <person name="Sekine M."/>
            <person name="Obayashi M."/>
            <person name="Nishi T."/>
            <person name="Shibahara T."/>
            <person name="Tanaka T."/>
            <person name="Ishii S."/>
            <person name="Yamamoto J."/>
            <person name="Saito K."/>
            <person name="Kawai Y."/>
            <person name="Isono Y."/>
            <person name="Nakamura Y."/>
            <person name="Nagahari K."/>
            <person name="Murakami K."/>
            <person name="Yasuda T."/>
            <person name="Iwayanagi T."/>
            <person name="Wagatsuma M."/>
            <person name="Shiratori A."/>
            <person name="Sudo H."/>
            <person name="Hosoiri T."/>
            <person name="Kaku Y."/>
            <person name="Kodaira H."/>
            <person name="Kondo H."/>
            <person name="Sugawara M."/>
            <person name="Takahashi M."/>
            <person name="Kanda K."/>
            <person name="Yokoi T."/>
            <person name="Furuya T."/>
            <person name="Kikkawa E."/>
            <person name="Omura Y."/>
            <person name="Abe K."/>
            <person name="Kamihara K."/>
            <person name="Katsuta N."/>
            <person name="Sato K."/>
            <person name="Tanikawa M."/>
            <person name="Yamazaki M."/>
            <person name="Ninomiya K."/>
            <person name="Ishibashi T."/>
            <person name="Yamashita H."/>
            <person name="Murakawa K."/>
            <person name="Fujimori K."/>
            <person name="Tanai H."/>
            <person name="Kimata M."/>
            <person name="Watanabe M."/>
            <person name="Hiraoka S."/>
            <person name="Chiba Y."/>
            <person name="Ishida S."/>
            <person name="Ono Y."/>
            <person name="Takiguchi S."/>
            <person name="Watanabe S."/>
            <person name="Yosida M."/>
            <person name="Hotuta T."/>
            <person name="Kusano J."/>
            <person name="Kanehori K."/>
            <person name="Takahashi-Fujii A."/>
            <person name="Hara H."/>
            <person name="Tanase T.-O."/>
            <person name="Nomura Y."/>
            <person name="Togiya S."/>
            <person name="Komai F."/>
            <person name="Hara R."/>
            <person name="Takeuchi K."/>
            <person name="Arita M."/>
            <person name="Imose N."/>
            <person name="Musashino K."/>
            <person name="Yuuki H."/>
            <person name="Oshima A."/>
            <person name="Sasaki N."/>
            <person name="Aotsuka S."/>
            <person name="Yoshikawa Y."/>
            <person name="Matsunawa H."/>
            <person name="Ichihara T."/>
            <person name="Shiohata N."/>
            <person name="Sano S."/>
            <person name="Moriya S."/>
            <person name="Momiyama H."/>
            <person name="Satoh N."/>
            <person name="Takami S."/>
            <person name="Terashima Y."/>
            <person name="Suzuki O."/>
            <person name="Nakagawa S."/>
            <person name="Senoh A."/>
            <person name="Mizoguchi H."/>
            <person name="Goto Y."/>
            <person name="Shimizu F."/>
            <person name="Wakebe H."/>
            <person name="Hishigaki H."/>
            <person name="Watanabe T."/>
            <person name="Sugiyama A."/>
            <person name="Takemoto M."/>
            <person name="Kawakami B."/>
            <person name="Yamazaki M."/>
            <person name="Watanabe K."/>
            <person name="Kumagai A."/>
            <person name="Itakura S."/>
            <person name="Fukuzumi Y."/>
            <person name="Fujimori Y."/>
            <person name="Komiyama M."/>
            <person name="Tashiro H."/>
            <person name="Tanigami A."/>
            <person name="Fujiwara T."/>
            <person name="Ono T."/>
            <person name="Yamada K."/>
            <person name="Fujii Y."/>
            <person name="Ozaki K."/>
            <person name="Hirao M."/>
            <person name="Ohmori Y."/>
            <person name="Kawabata A."/>
            <person name="Hikiji T."/>
            <person name="Kobatake N."/>
            <person name="Inagaki H."/>
            <person name="Ikema Y."/>
            <person name="Okamoto S."/>
            <person name="Okitani R."/>
            <person name="Kawakami T."/>
            <person name="Noguchi S."/>
            <person name="Itoh T."/>
            <person name="Shigeta K."/>
            <person name="Senba T."/>
            <person name="Matsumura K."/>
            <person name="Nakajima Y."/>
            <person name="Mizuno T."/>
            <person name="Morinaga M."/>
            <person name="Sasaki M."/>
            <person name="Togashi T."/>
            <person name="Oyama M."/>
            <person name="Hata H."/>
            <person name="Watanabe M."/>
            <person name="Komatsu T."/>
            <person name="Mizushima-Sugano J."/>
            <person name="Satoh T."/>
            <person name="Shirai Y."/>
            <person name="Takahashi Y."/>
            <person name="Nakagawa K."/>
            <person name="Okumura K."/>
            <person name="Nagase T."/>
            <person name="Nomura N."/>
            <person name="Kikuchi H."/>
            <person name="Masuho Y."/>
            <person name="Yamashita R."/>
            <person name="Nakai K."/>
            <person name="Yada T."/>
            <person name="Nakamura Y."/>
            <person name="Ohara O."/>
            <person name="Isogai T."/>
            <person name="Sugano S."/>
        </authorList>
    </citation>
    <scope>NUCLEOTIDE SEQUENCE [LARGE SCALE MRNA] (ISOFORM 1)</scope>
    <source>
        <tissue>Brain</tissue>
    </source>
</reference>
<reference key="2">
    <citation type="journal article" date="2006" name="Nature">
        <title>Analysis of the DNA sequence and duplication history of human chromosome 15.</title>
        <authorList>
            <person name="Zody M.C."/>
            <person name="Garber M."/>
            <person name="Sharpe T."/>
            <person name="Young S.K."/>
            <person name="Rowen L."/>
            <person name="O'Neill K."/>
            <person name="Whittaker C.A."/>
            <person name="Kamal M."/>
            <person name="Chang J.L."/>
            <person name="Cuomo C.A."/>
            <person name="Dewar K."/>
            <person name="FitzGerald M.G."/>
            <person name="Kodira C.D."/>
            <person name="Madan A."/>
            <person name="Qin S."/>
            <person name="Yang X."/>
            <person name="Abbasi N."/>
            <person name="Abouelleil A."/>
            <person name="Arachchi H.M."/>
            <person name="Baradarani L."/>
            <person name="Birditt B."/>
            <person name="Bloom S."/>
            <person name="Bloom T."/>
            <person name="Borowsky M.L."/>
            <person name="Burke J."/>
            <person name="Butler J."/>
            <person name="Cook A."/>
            <person name="DeArellano K."/>
            <person name="DeCaprio D."/>
            <person name="Dorris L. III"/>
            <person name="Dors M."/>
            <person name="Eichler E.E."/>
            <person name="Engels R."/>
            <person name="Fahey J."/>
            <person name="Fleetwood P."/>
            <person name="Friedman C."/>
            <person name="Gearin G."/>
            <person name="Hall J.L."/>
            <person name="Hensley G."/>
            <person name="Johnson E."/>
            <person name="Jones C."/>
            <person name="Kamat A."/>
            <person name="Kaur A."/>
            <person name="Locke D.P."/>
            <person name="Madan A."/>
            <person name="Munson G."/>
            <person name="Jaffe D.B."/>
            <person name="Lui A."/>
            <person name="Macdonald P."/>
            <person name="Mauceli E."/>
            <person name="Naylor J.W."/>
            <person name="Nesbitt R."/>
            <person name="Nicol R."/>
            <person name="O'Leary S.B."/>
            <person name="Ratcliffe A."/>
            <person name="Rounsley S."/>
            <person name="She X."/>
            <person name="Sneddon K.M.B."/>
            <person name="Stewart S."/>
            <person name="Sougnez C."/>
            <person name="Stone S.M."/>
            <person name="Topham K."/>
            <person name="Vincent D."/>
            <person name="Wang S."/>
            <person name="Zimmer A.R."/>
            <person name="Birren B.W."/>
            <person name="Hood L."/>
            <person name="Lander E.S."/>
            <person name="Nusbaum C."/>
        </authorList>
    </citation>
    <scope>NUCLEOTIDE SEQUENCE [LARGE SCALE GENOMIC DNA]</scope>
</reference>
<reference key="3">
    <citation type="journal article" date="2004" name="Genome Res.">
        <title>The status, quality, and expansion of the NIH full-length cDNA project: the Mammalian Gene Collection (MGC).</title>
        <authorList>
            <consortium name="The MGC Project Team"/>
        </authorList>
    </citation>
    <scope>NUCLEOTIDE SEQUENCE [LARGE SCALE MRNA] (ISOFORM 1)</scope>
    <source>
        <tissue>Brain</tissue>
    </source>
</reference>
<reference key="4">
    <citation type="journal article" date="2008" name="J. Cell Sci.">
        <title>EML3 is a nuclear microtubule-binding protein required for the correct alignment of chromosomes in metaphase.</title>
        <authorList>
            <person name="Tegha-Dunghu J."/>
            <person name="Neumann B."/>
            <person name="Reber S."/>
            <person name="Krause R."/>
            <person name="Erfle H."/>
            <person name="Walter T."/>
            <person name="Held M."/>
            <person name="Rogers P."/>
            <person name="Hupfeld K."/>
            <person name="Ruppert T."/>
            <person name="Ellenberg J."/>
            <person name="Gruss O.J."/>
        </authorList>
    </citation>
    <scope>SUBCELLULAR LOCATION</scope>
</reference>
<reference key="5">
    <citation type="journal article" date="2011" name="BMC Syst. Biol.">
        <title>Initial characterization of the human central proteome.</title>
        <authorList>
            <person name="Burkard T.R."/>
            <person name="Planyavsky M."/>
            <person name="Kaupe I."/>
            <person name="Breitwieser F.P."/>
            <person name="Buerckstuemmer T."/>
            <person name="Bennett K.L."/>
            <person name="Superti-Furga G."/>
            <person name="Colinge J."/>
        </authorList>
    </citation>
    <scope>IDENTIFICATION BY MASS SPECTROMETRY [LARGE SCALE ANALYSIS]</scope>
</reference>
<reference key="6">
    <citation type="journal article" date="2011" name="Science">
        <title>HSPC117 is the essential subunit of a human tRNA splicing ligase complex.</title>
        <authorList>
            <person name="Popow J."/>
            <person name="Englert M."/>
            <person name="Weitzer S."/>
            <person name="Schleiffer A."/>
            <person name="Mierzwa B."/>
            <person name="Mechtler K."/>
            <person name="Trowitzsch S."/>
            <person name="Will C.L."/>
            <person name="Luhrmann R."/>
            <person name="Soll D."/>
            <person name="Martinez J."/>
        </authorList>
    </citation>
    <scope>IDENTIFICATION IN THE TRNA SPLICING LIGASE COMPLEX</scope>
</reference>
<reference key="7">
    <citation type="journal article" date="2014" name="Nature">
        <title>Analysis of orthologous groups reveals archease and DDX1 as tRNA splicing factors.</title>
        <authorList>
            <person name="Popow J."/>
            <person name="Jurkin J."/>
            <person name="Schleiffer A."/>
            <person name="Martinez J."/>
        </authorList>
    </citation>
    <scope>IDENTIFICATION IN THE TRNA SPLICING LIGASE COMPLEX</scope>
</reference>
<reference key="8">
    <citation type="journal article" date="2014" name="PLoS ONE">
        <title>hCLE/C14orf166 associates with DDX1-HSPC117-FAM98B in a novel transcription-dependent shuttling RNA-transporting complex.</title>
        <authorList>
            <person name="Perez-Gonzalez A."/>
            <person name="Pazo A."/>
            <person name="Navajas R."/>
            <person name="Ciordia S."/>
            <person name="Rodriguez-Frandsen A."/>
            <person name="Nieto A."/>
        </authorList>
    </citation>
    <scope>SUBCELLULAR LOCATION</scope>
</reference>
<reference key="9">
    <citation type="journal article" date="2017" name="Int. J. Biochem. Cell Biol.">
        <title>FAM98A associates with DDX1-C14orf166-FAM98B in a novel complex involved in colorectal cancer progression.</title>
        <authorList>
            <person name="Akter K.A."/>
            <person name="Mansour M.A."/>
            <person name="Hyodo T."/>
            <person name="Senga T."/>
        </authorList>
    </citation>
    <scope>FUNCTION</scope>
    <scope>INTERACTION WITH FAM98A</scope>
    <scope>SUBUNIT</scope>
    <scope>TISSUE SPECIFICITY</scope>
</reference>
<proteinExistence type="evidence at protein level"/>
<dbReference type="EMBL" id="AK095745">
    <property type="protein sequence ID" value="BAC04621.1"/>
    <property type="molecule type" value="mRNA"/>
</dbReference>
<dbReference type="EMBL" id="AC109631">
    <property type="status" value="NOT_ANNOTATED_CDS"/>
    <property type="molecule type" value="Genomic_DNA"/>
</dbReference>
<dbReference type="EMBL" id="AC116158">
    <property type="status" value="NOT_ANNOTATED_CDS"/>
    <property type="molecule type" value="Genomic_DNA"/>
</dbReference>
<dbReference type="EMBL" id="BC093898">
    <property type="protein sequence ID" value="AAH93898.1"/>
    <property type="molecule type" value="mRNA"/>
</dbReference>
<dbReference type="CCDS" id="CCDS10047.2">
    <molecule id="Q52LJ0-2"/>
</dbReference>
<dbReference type="RefSeq" id="NP_775882.2">
    <molecule id="Q52LJ0-2"/>
    <property type="nucleotide sequence ID" value="NM_173611.4"/>
</dbReference>
<dbReference type="SMR" id="Q52LJ0"/>
<dbReference type="BioGRID" id="129661">
    <property type="interactions" value="119"/>
</dbReference>
<dbReference type="ComplexPortal" id="CPX-6411">
    <property type="entry name" value="tRNA-splicing ligase complex"/>
</dbReference>
<dbReference type="CORUM" id="Q52LJ0"/>
<dbReference type="DIP" id="DIP-50585N"/>
<dbReference type="FunCoup" id="Q52LJ0">
    <property type="interactions" value="3927"/>
</dbReference>
<dbReference type="IntAct" id="Q52LJ0">
    <property type="interactions" value="28"/>
</dbReference>
<dbReference type="MINT" id="Q52LJ0"/>
<dbReference type="STRING" id="9606.ENSP00000380734"/>
<dbReference type="GlyGen" id="Q52LJ0">
    <property type="glycosylation" value="1 site, 1 O-linked glycan (1 site)"/>
</dbReference>
<dbReference type="iPTMnet" id="Q52LJ0"/>
<dbReference type="MetOSite" id="Q52LJ0"/>
<dbReference type="PhosphoSitePlus" id="Q52LJ0"/>
<dbReference type="SwissPalm" id="Q52LJ0"/>
<dbReference type="BioMuta" id="FAM98B"/>
<dbReference type="DMDM" id="74735811"/>
<dbReference type="jPOST" id="Q52LJ0"/>
<dbReference type="MassIVE" id="Q52LJ0"/>
<dbReference type="PaxDb" id="9606-ENSP00000380734"/>
<dbReference type="PeptideAtlas" id="Q52LJ0"/>
<dbReference type="ProteomicsDB" id="2137"/>
<dbReference type="ProteomicsDB" id="62424">
    <molecule id="Q52LJ0-1"/>
</dbReference>
<dbReference type="Pumba" id="Q52LJ0"/>
<dbReference type="Antibodypedia" id="2032">
    <property type="antibodies" value="107 antibodies from 21 providers"/>
</dbReference>
<dbReference type="DNASU" id="283742"/>
<dbReference type="Ensembl" id="ENST00000397609.6">
    <molecule id="Q52LJ0-2"/>
    <property type="protein sequence ID" value="ENSP00000380734.2"/>
    <property type="gene ID" value="ENSG00000171262.11"/>
</dbReference>
<dbReference type="Ensembl" id="ENST00000491535.5">
    <molecule id="Q52LJ0-1"/>
    <property type="protein sequence ID" value="ENSP00000453166.1"/>
    <property type="gene ID" value="ENSG00000171262.11"/>
</dbReference>
<dbReference type="GeneID" id="283742"/>
<dbReference type="KEGG" id="hsa:283742"/>
<dbReference type="MANE-Select" id="ENST00000397609.6">
    <property type="protein sequence ID" value="ENSP00000380734.2"/>
    <property type="RefSeq nucleotide sequence ID" value="NM_173611.4"/>
    <property type="RefSeq protein sequence ID" value="NP_775882.2"/>
</dbReference>
<dbReference type="UCSC" id="uc001zkb.3">
    <molecule id="Q52LJ0-2"/>
    <property type="organism name" value="human"/>
</dbReference>
<dbReference type="AGR" id="HGNC:26773"/>
<dbReference type="CTD" id="283742"/>
<dbReference type="GeneCards" id="FAM98B"/>
<dbReference type="HGNC" id="HGNC:26773">
    <property type="gene designation" value="FAM98B"/>
</dbReference>
<dbReference type="HPA" id="ENSG00000171262">
    <property type="expression patterns" value="Low tissue specificity"/>
</dbReference>
<dbReference type="MIM" id="616142">
    <property type="type" value="gene"/>
</dbReference>
<dbReference type="neXtProt" id="NX_Q52LJ0"/>
<dbReference type="OpenTargets" id="ENSG00000171262"/>
<dbReference type="PharmGKB" id="PA142671778"/>
<dbReference type="VEuPathDB" id="HostDB:ENSG00000171262"/>
<dbReference type="eggNOG" id="KOG3973">
    <property type="taxonomic scope" value="Eukaryota"/>
</dbReference>
<dbReference type="GeneTree" id="ENSGT00440000037341"/>
<dbReference type="HOGENOM" id="CLU_038408_1_1_1"/>
<dbReference type="InParanoid" id="Q52LJ0"/>
<dbReference type="OMA" id="QQWISGS"/>
<dbReference type="OrthoDB" id="512356at2759"/>
<dbReference type="PAN-GO" id="Q52LJ0">
    <property type="GO annotations" value="1 GO annotation based on evolutionary models"/>
</dbReference>
<dbReference type="PhylomeDB" id="Q52LJ0"/>
<dbReference type="TreeFam" id="TF320308"/>
<dbReference type="BioCyc" id="MetaCyc:ENSG00000171262-MONOMER"/>
<dbReference type="PathwayCommons" id="Q52LJ0"/>
<dbReference type="Reactome" id="R-HSA-6784531">
    <property type="pathway name" value="tRNA processing in the nucleus"/>
</dbReference>
<dbReference type="SignaLink" id="Q52LJ0"/>
<dbReference type="BioGRID-ORCS" id="283742">
    <property type="hits" value="273 hits in 1168 CRISPR screens"/>
</dbReference>
<dbReference type="CD-CODE" id="91857CE7">
    <property type="entry name" value="Nucleolus"/>
</dbReference>
<dbReference type="CD-CODE" id="DEE660B4">
    <property type="entry name" value="Stress granule"/>
</dbReference>
<dbReference type="ChiTaRS" id="FAM98B">
    <property type="organism name" value="human"/>
</dbReference>
<dbReference type="GenomeRNAi" id="283742"/>
<dbReference type="Pharos" id="Q52LJ0">
    <property type="development level" value="Tdark"/>
</dbReference>
<dbReference type="PRO" id="PR:Q52LJ0"/>
<dbReference type="Proteomes" id="UP000005640">
    <property type="component" value="Chromosome 15"/>
</dbReference>
<dbReference type="RNAct" id="Q52LJ0">
    <property type="molecule type" value="protein"/>
</dbReference>
<dbReference type="Bgee" id="ENSG00000171262">
    <property type="expression patterns" value="Expressed in upper arm skin and 196 other cell types or tissues"/>
</dbReference>
<dbReference type="ExpressionAtlas" id="Q52LJ0">
    <property type="expression patterns" value="baseline and differential"/>
</dbReference>
<dbReference type="GO" id="GO:0005737">
    <property type="term" value="C:cytoplasm"/>
    <property type="evidence" value="ECO:0000314"/>
    <property type="project" value="UniProtKB"/>
</dbReference>
<dbReference type="GO" id="GO:0043231">
    <property type="term" value="C:intracellular membrane-bounded organelle"/>
    <property type="evidence" value="ECO:0000314"/>
    <property type="project" value="HPA"/>
</dbReference>
<dbReference type="GO" id="GO:0005654">
    <property type="term" value="C:nucleoplasm"/>
    <property type="evidence" value="ECO:0000314"/>
    <property type="project" value="HPA"/>
</dbReference>
<dbReference type="GO" id="GO:0005634">
    <property type="term" value="C:nucleus"/>
    <property type="evidence" value="ECO:0000314"/>
    <property type="project" value="UniProtKB"/>
</dbReference>
<dbReference type="GO" id="GO:0072669">
    <property type="term" value="C:tRNA-splicing ligase complex"/>
    <property type="evidence" value="ECO:0000314"/>
    <property type="project" value="UniProtKB"/>
</dbReference>
<dbReference type="GO" id="GO:0042802">
    <property type="term" value="F:identical protein binding"/>
    <property type="evidence" value="ECO:0000314"/>
    <property type="project" value="UniProtKB"/>
</dbReference>
<dbReference type="GO" id="GO:0008276">
    <property type="term" value="F:protein methyltransferase activity"/>
    <property type="evidence" value="ECO:0000315"/>
    <property type="project" value="UniProtKB"/>
</dbReference>
<dbReference type="GO" id="GO:0003723">
    <property type="term" value="F:RNA binding"/>
    <property type="evidence" value="ECO:0007005"/>
    <property type="project" value="UniProtKB"/>
</dbReference>
<dbReference type="GO" id="GO:0008284">
    <property type="term" value="P:positive regulation of cell population proliferation"/>
    <property type="evidence" value="ECO:0000315"/>
    <property type="project" value="UniProtKB"/>
</dbReference>
<dbReference type="GO" id="GO:0010628">
    <property type="term" value="P:positive regulation of gene expression"/>
    <property type="evidence" value="ECO:0000315"/>
    <property type="project" value="UniProtKB"/>
</dbReference>
<dbReference type="GO" id="GO:0006479">
    <property type="term" value="P:protein methylation"/>
    <property type="evidence" value="ECO:0000315"/>
    <property type="project" value="UniProtKB"/>
</dbReference>
<dbReference type="GO" id="GO:0006388">
    <property type="term" value="P:tRNA splicing, via endonucleolytic cleavage and ligation"/>
    <property type="evidence" value="ECO:0000303"/>
    <property type="project" value="ComplexPortal"/>
</dbReference>
<dbReference type="InterPro" id="IPR018797">
    <property type="entry name" value="FAM98"/>
</dbReference>
<dbReference type="PANTHER" id="PTHR31353">
    <property type="entry name" value="FAM98"/>
    <property type="match status" value="1"/>
</dbReference>
<dbReference type="PANTHER" id="PTHR31353:SF11">
    <property type="entry name" value="PROTEIN FAM98B"/>
    <property type="match status" value="1"/>
</dbReference>
<dbReference type="Pfam" id="PF10239">
    <property type="entry name" value="DUF2465"/>
    <property type="match status" value="1"/>
</dbReference>
<dbReference type="PRINTS" id="PR01228">
    <property type="entry name" value="EGGSHELL"/>
</dbReference>
<accession>Q52LJ0</accession>
<accession>A8MUW5</accession>
<accession>Q8N935</accession>
<name>FA98B_HUMAN</name>
<keyword id="KW-0025">Alternative splicing</keyword>
<keyword id="KW-0963">Cytoplasm</keyword>
<keyword id="KW-0539">Nucleus</keyword>
<keyword id="KW-1267">Proteomics identification</keyword>
<keyword id="KW-1185">Reference proteome</keyword>
<evidence type="ECO:0000256" key="1">
    <source>
        <dbReference type="SAM" id="MobiDB-lite"/>
    </source>
</evidence>
<evidence type="ECO:0000269" key="2">
    <source>
    </source>
</evidence>
<evidence type="ECO:0000269" key="3">
    <source>
    </source>
</evidence>
<evidence type="ECO:0000269" key="4">
    <source>
    </source>
</evidence>
<evidence type="ECO:0000269" key="5">
    <source>
    </source>
</evidence>
<evidence type="ECO:0000269" key="6">
    <source>
    </source>
</evidence>
<evidence type="ECO:0000305" key="7"/>
<protein>
    <recommendedName>
        <fullName>Protein FAM98B</fullName>
    </recommendedName>
</protein>
<feature type="chain" id="PRO_0000187188" description="Protein FAM98B">
    <location>
        <begin position="1"/>
        <end position="433"/>
    </location>
</feature>
<feature type="region of interest" description="Disordered" evidence="1">
    <location>
        <begin position="303"/>
        <end position="433"/>
    </location>
</feature>
<feature type="compositionally biased region" description="Basic and acidic residues" evidence="1">
    <location>
        <begin position="305"/>
        <end position="314"/>
    </location>
</feature>
<feature type="compositionally biased region" description="Gly residues" evidence="1">
    <location>
        <begin position="331"/>
        <end position="433"/>
    </location>
</feature>
<feature type="splice variant" id="VSP_060151" description="In isoform 1.">
    <original>LMGRVPDRGGRPNEIEPPPPEMPPWQKRQE</original>
    <variation>GVSFSTVENELMISYLMFLQILVYFSFMSW</variation>
    <location>
        <begin position="301"/>
        <end position="330"/>
    </location>
</feature>
<feature type="splice variant" id="VSP_060152" description="In isoform 1.">
    <location>
        <begin position="331"/>
        <end position="433"/>
    </location>
</feature>
<feature type="sequence conflict" description="In Ref. 1; BAC04621." evidence="7" ref="1">
    <original>A</original>
    <variation>T</variation>
    <location>
        <position position="22"/>
    </location>
</feature>
<organism>
    <name type="scientific">Homo sapiens</name>
    <name type="common">Human</name>
    <dbReference type="NCBI Taxonomy" id="9606"/>
    <lineage>
        <taxon>Eukaryota</taxon>
        <taxon>Metazoa</taxon>
        <taxon>Chordata</taxon>
        <taxon>Craniata</taxon>
        <taxon>Vertebrata</taxon>
        <taxon>Euteleostomi</taxon>
        <taxon>Mammalia</taxon>
        <taxon>Eutheria</taxon>
        <taxon>Euarchontoglires</taxon>
        <taxon>Primates</taxon>
        <taxon>Haplorrhini</taxon>
        <taxon>Catarrhini</taxon>
        <taxon>Hominidae</taxon>
        <taxon>Homo</taxon>
    </lineage>
</organism>
<gene>
    <name type="primary">FAM98B</name>
</gene>
<comment type="function">
    <text evidence="6">Positively stimulates PRMT1-induced protein arginine dimethylated arginine methylation (PubMed:28040436).</text>
</comment>
<comment type="subunit">
    <text evidence="3 5 6">Homodimer (PubMed:28040436). Component of the tRNA-splicing ligase complex (PubMed:21311021, PubMed:24870230). Interacts with FAM98A (PubMed:28040436).</text>
</comment>
<comment type="interaction">
    <interactant intactId="EBI-1043130">
        <id>Q52LJ0</id>
    </interactant>
    <interactant intactId="EBI-1104547">
        <id>Q9Y224</id>
        <label>RTRAF</label>
    </interactant>
    <organismsDiffer>false</organismsDiffer>
    <experiments>2</experiments>
</comment>
<comment type="subcellular location">
    <subcellularLocation>
        <location evidence="4">Nucleus</location>
    </subcellularLocation>
    <subcellularLocation>
        <location evidence="2 4">Cytoplasm</location>
    </subcellularLocation>
</comment>
<comment type="alternative products">
    <event type="alternative splicing"/>
    <isoform>
        <id>Q52LJ0-2</id>
        <name>2</name>
        <sequence type="displayed"/>
    </isoform>
    <isoform>
        <id>Q52LJ0-1</id>
        <name>1</name>
        <sequence type="described" ref="VSP_060151 VSP_060152"/>
    </isoform>
</comment>
<comment type="tissue specificity">
    <text evidence="6">Expressed strongly in colorectal cancer tissues compared to wild-type colon samples (at protein level) (PubMed:28040436). Expressed strongly in colorectal cancer tissues compared to wild-type colon samples (PubMed:28040436).</text>
</comment>
<comment type="miscellaneous">
    <molecule>Isoform 1</molecule>
    <text evidence="7">Dubious isoform due to intron retention.</text>
</comment>
<comment type="similarity">
    <text evidence="7">Belongs to the FAM98 family.</text>
</comment>